<sequence>MANILRKIIENDKGEIKKLEKTAKKVESYADAMAALSDEELQAKTEEFKQRYQNGESLDQLLPEAFAVVREGAKRVLGLFPYRVQIMGGIVLHYGDVAEMRTGEGKTLTATMPVYLNAISGEGVHVITVNEYLSERDATEMGELYSWLGLSVGINLSSKSPAEKREAYNCDITYSTSSEVGFDYLRDNMVVRKENMVQRPLNFALVDEVDSVLIDEARTPLIVSGPVSSETNQLYHRADAFVKTLTEDDYAIDIPTKTIGLNDSGIDKAEEFFNLENLYDIDNVALTHYIDNALRANYIMLRDIDYVVSPEQEILIVDQFTGRTMEGRRFSDGLHQAIEAKEGVPVQEETKTSASITYQNMFRMYKKLSGMTGTGKTEEDEFREIYNMRVIPIPTNRPIQRIDHDDLLYSTLDAKFRAVVQDVKRRYEKGQPVLIGTVAVETSDLISKMLVDAGIPHEVLNAKNHEKEAHIIMNAGQRGAVTIATNMAGRGTDIKLGEGVLELGGLCVIGTERHESRRIDNQLRGRSGRQGDPGESQFYLSLEDELMRRFGSDRIKHVLERLNADDEDIVIKSRMLTRQVESAQKRVEGNNYDTRKQVLQYDDVMREQREIIYAERYDVITAERDLEPEIKAMIKRTINRTVDGHSRNDQEEALKGILNFARQALVPEDAISLEDLKEVGEVTKRSVNYDAIKVYLTELADNVYDRQIKKLRSEEAIREFQKVLILMVVDNKWTDHIDALDQLRNAVGMRGYAQNNPIVEYQSESFKMFQDMIGAIEYDVTRTMMKAQIHEQSREHVNERVSTTATGNIQAHQADANGQEIDFSKVGRNDFCPCGSGKKFKNCHGRKQF</sequence>
<feature type="chain" id="PRO_0000318461" description="Protein translocase subunit SecA">
    <location>
        <begin position="1"/>
        <end position="849"/>
    </location>
</feature>
<feature type="binding site" evidence="1">
    <location>
        <position position="85"/>
    </location>
    <ligand>
        <name>ATP</name>
        <dbReference type="ChEBI" id="CHEBI:30616"/>
    </ligand>
</feature>
<feature type="binding site" evidence="1">
    <location>
        <begin position="103"/>
        <end position="107"/>
    </location>
    <ligand>
        <name>ATP</name>
        <dbReference type="ChEBI" id="CHEBI:30616"/>
    </ligand>
</feature>
<feature type="binding site" evidence="1">
    <location>
        <position position="493"/>
    </location>
    <ligand>
        <name>ATP</name>
        <dbReference type="ChEBI" id="CHEBI:30616"/>
    </ligand>
</feature>
<feature type="binding site" evidence="1">
    <location>
        <position position="832"/>
    </location>
    <ligand>
        <name>Zn(2+)</name>
        <dbReference type="ChEBI" id="CHEBI:29105"/>
    </ligand>
</feature>
<feature type="binding site" evidence="1">
    <location>
        <position position="834"/>
    </location>
    <ligand>
        <name>Zn(2+)</name>
        <dbReference type="ChEBI" id="CHEBI:29105"/>
    </ligand>
</feature>
<feature type="binding site" evidence="1">
    <location>
        <position position="843"/>
    </location>
    <ligand>
        <name>Zn(2+)</name>
        <dbReference type="ChEBI" id="CHEBI:29105"/>
    </ligand>
</feature>
<feature type="binding site" evidence="1">
    <location>
        <position position="844"/>
    </location>
    <ligand>
        <name>Zn(2+)</name>
        <dbReference type="ChEBI" id="CHEBI:29105"/>
    </ligand>
</feature>
<proteinExistence type="inferred from homology"/>
<organism>
    <name type="scientific">Streptococcus thermophilus (strain ATCC BAA-491 / LMD-9)</name>
    <dbReference type="NCBI Taxonomy" id="322159"/>
    <lineage>
        <taxon>Bacteria</taxon>
        <taxon>Bacillati</taxon>
        <taxon>Bacillota</taxon>
        <taxon>Bacilli</taxon>
        <taxon>Lactobacillales</taxon>
        <taxon>Streptococcaceae</taxon>
        <taxon>Streptococcus</taxon>
    </lineage>
</organism>
<reference key="1">
    <citation type="journal article" date="2006" name="Proc. Natl. Acad. Sci. U.S.A.">
        <title>Comparative genomics of the lactic acid bacteria.</title>
        <authorList>
            <person name="Makarova K.S."/>
            <person name="Slesarev A."/>
            <person name="Wolf Y.I."/>
            <person name="Sorokin A."/>
            <person name="Mirkin B."/>
            <person name="Koonin E.V."/>
            <person name="Pavlov A."/>
            <person name="Pavlova N."/>
            <person name="Karamychev V."/>
            <person name="Polouchine N."/>
            <person name="Shakhova V."/>
            <person name="Grigoriev I."/>
            <person name="Lou Y."/>
            <person name="Rohksar D."/>
            <person name="Lucas S."/>
            <person name="Huang K."/>
            <person name="Goodstein D.M."/>
            <person name="Hawkins T."/>
            <person name="Plengvidhya V."/>
            <person name="Welker D."/>
            <person name="Hughes J."/>
            <person name="Goh Y."/>
            <person name="Benson A."/>
            <person name="Baldwin K."/>
            <person name="Lee J.-H."/>
            <person name="Diaz-Muniz I."/>
            <person name="Dosti B."/>
            <person name="Smeianov V."/>
            <person name="Wechter W."/>
            <person name="Barabote R."/>
            <person name="Lorca G."/>
            <person name="Altermann E."/>
            <person name="Barrangou R."/>
            <person name="Ganesan B."/>
            <person name="Xie Y."/>
            <person name="Rawsthorne H."/>
            <person name="Tamir D."/>
            <person name="Parker C."/>
            <person name="Breidt F."/>
            <person name="Broadbent J.R."/>
            <person name="Hutkins R."/>
            <person name="O'Sullivan D."/>
            <person name="Steele J."/>
            <person name="Unlu G."/>
            <person name="Saier M.H. Jr."/>
            <person name="Klaenhammer T."/>
            <person name="Richardson P."/>
            <person name="Kozyavkin S."/>
            <person name="Weimer B.C."/>
            <person name="Mills D.A."/>
        </authorList>
    </citation>
    <scope>NUCLEOTIDE SEQUENCE [LARGE SCALE GENOMIC DNA]</scope>
    <source>
        <strain>ATCC BAA-491 / LMD-9</strain>
    </source>
</reference>
<dbReference type="EC" id="7.4.2.8" evidence="1"/>
<dbReference type="EMBL" id="CP000419">
    <property type="protein sequence ID" value="ABJ66848.1"/>
    <property type="molecule type" value="Genomic_DNA"/>
</dbReference>
<dbReference type="RefSeq" id="WP_011681614.1">
    <property type="nucleotide sequence ID" value="NC_008532.1"/>
</dbReference>
<dbReference type="SMR" id="Q03IX4"/>
<dbReference type="KEGG" id="ste:STER_1705"/>
<dbReference type="HOGENOM" id="CLU_005314_3_0_9"/>
<dbReference type="GO" id="GO:0031522">
    <property type="term" value="C:cell envelope Sec protein transport complex"/>
    <property type="evidence" value="ECO:0007669"/>
    <property type="project" value="TreeGrafter"/>
</dbReference>
<dbReference type="GO" id="GO:0005829">
    <property type="term" value="C:cytosol"/>
    <property type="evidence" value="ECO:0007669"/>
    <property type="project" value="TreeGrafter"/>
</dbReference>
<dbReference type="GO" id="GO:0005886">
    <property type="term" value="C:plasma membrane"/>
    <property type="evidence" value="ECO:0007669"/>
    <property type="project" value="UniProtKB-SubCell"/>
</dbReference>
<dbReference type="GO" id="GO:0005524">
    <property type="term" value="F:ATP binding"/>
    <property type="evidence" value="ECO:0007669"/>
    <property type="project" value="UniProtKB-UniRule"/>
</dbReference>
<dbReference type="GO" id="GO:0046872">
    <property type="term" value="F:metal ion binding"/>
    <property type="evidence" value="ECO:0007669"/>
    <property type="project" value="UniProtKB-KW"/>
</dbReference>
<dbReference type="GO" id="GO:0008564">
    <property type="term" value="F:protein-exporting ATPase activity"/>
    <property type="evidence" value="ECO:0007669"/>
    <property type="project" value="UniProtKB-EC"/>
</dbReference>
<dbReference type="GO" id="GO:0065002">
    <property type="term" value="P:intracellular protein transmembrane transport"/>
    <property type="evidence" value="ECO:0007669"/>
    <property type="project" value="UniProtKB-UniRule"/>
</dbReference>
<dbReference type="GO" id="GO:0017038">
    <property type="term" value="P:protein import"/>
    <property type="evidence" value="ECO:0007669"/>
    <property type="project" value="InterPro"/>
</dbReference>
<dbReference type="GO" id="GO:0006605">
    <property type="term" value="P:protein targeting"/>
    <property type="evidence" value="ECO:0007669"/>
    <property type="project" value="UniProtKB-UniRule"/>
</dbReference>
<dbReference type="GO" id="GO:0043952">
    <property type="term" value="P:protein transport by the Sec complex"/>
    <property type="evidence" value="ECO:0007669"/>
    <property type="project" value="TreeGrafter"/>
</dbReference>
<dbReference type="CDD" id="cd17928">
    <property type="entry name" value="DEXDc_SecA"/>
    <property type="match status" value="1"/>
</dbReference>
<dbReference type="CDD" id="cd18803">
    <property type="entry name" value="SF2_C_secA"/>
    <property type="match status" value="1"/>
</dbReference>
<dbReference type="FunFam" id="3.40.50.300:FF:000429">
    <property type="entry name" value="Preprotein translocase subunit SecA"/>
    <property type="match status" value="1"/>
</dbReference>
<dbReference type="FunFam" id="3.90.1440.10:FF:000001">
    <property type="entry name" value="Preprotein translocase subunit SecA"/>
    <property type="match status" value="1"/>
</dbReference>
<dbReference type="Gene3D" id="1.10.3060.10">
    <property type="entry name" value="Helical scaffold and wing domains of SecA"/>
    <property type="match status" value="1"/>
</dbReference>
<dbReference type="Gene3D" id="3.40.50.300">
    <property type="entry name" value="P-loop containing nucleotide triphosphate hydrolases"/>
    <property type="match status" value="3"/>
</dbReference>
<dbReference type="Gene3D" id="3.90.1440.10">
    <property type="entry name" value="SecA, preprotein cross-linking domain"/>
    <property type="match status" value="1"/>
</dbReference>
<dbReference type="HAMAP" id="MF_01382">
    <property type="entry name" value="SecA"/>
    <property type="match status" value="1"/>
</dbReference>
<dbReference type="InterPro" id="IPR014001">
    <property type="entry name" value="Helicase_ATP-bd"/>
</dbReference>
<dbReference type="InterPro" id="IPR001650">
    <property type="entry name" value="Helicase_C-like"/>
</dbReference>
<dbReference type="InterPro" id="IPR027417">
    <property type="entry name" value="P-loop_NTPase"/>
</dbReference>
<dbReference type="InterPro" id="IPR004027">
    <property type="entry name" value="SEC_C_motif"/>
</dbReference>
<dbReference type="InterPro" id="IPR000185">
    <property type="entry name" value="SecA"/>
</dbReference>
<dbReference type="InterPro" id="IPR020937">
    <property type="entry name" value="SecA_CS"/>
</dbReference>
<dbReference type="InterPro" id="IPR011115">
    <property type="entry name" value="SecA_DEAD"/>
</dbReference>
<dbReference type="InterPro" id="IPR014018">
    <property type="entry name" value="SecA_motor_DEAD"/>
</dbReference>
<dbReference type="InterPro" id="IPR011130">
    <property type="entry name" value="SecA_preprotein_X-link_dom"/>
</dbReference>
<dbReference type="InterPro" id="IPR044722">
    <property type="entry name" value="SecA_SF2_C"/>
</dbReference>
<dbReference type="InterPro" id="IPR011116">
    <property type="entry name" value="SecA_Wing/Scaffold"/>
</dbReference>
<dbReference type="InterPro" id="IPR036266">
    <property type="entry name" value="SecA_Wing/Scaffold_sf"/>
</dbReference>
<dbReference type="InterPro" id="IPR036670">
    <property type="entry name" value="SecA_X-link_sf"/>
</dbReference>
<dbReference type="NCBIfam" id="NF006630">
    <property type="entry name" value="PRK09200.1"/>
    <property type="match status" value="1"/>
</dbReference>
<dbReference type="NCBIfam" id="TIGR00963">
    <property type="entry name" value="secA"/>
    <property type="match status" value="1"/>
</dbReference>
<dbReference type="PANTHER" id="PTHR30612:SF0">
    <property type="entry name" value="CHLOROPLAST PROTEIN-TRANSPORTING ATPASE"/>
    <property type="match status" value="1"/>
</dbReference>
<dbReference type="PANTHER" id="PTHR30612">
    <property type="entry name" value="SECA INNER MEMBRANE COMPONENT OF SEC PROTEIN SECRETION SYSTEM"/>
    <property type="match status" value="1"/>
</dbReference>
<dbReference type="Pfam" id="PF21090">
    <property type="entry name" value="P-loop_SecA"/>
    <property type="match status" value="1"/>
</dbReference>
<dbReference type="Pfam" id="PF02810">
    <property type="entry name" value="SEC-C"/>
    <property type="match status" value="1"/>
</dbReference>
<dbReference type="Pfam" id="PF07517">
    <property type="entry name" value="SecA_DEAD"/>
    <property type="match status" value="1"/>
</dbReference>
<dbReference type="Pfam" id="PF01043">
    <property type="entry name" value="SecA_PP_bind"/>
    <property type="match status" value="1"/>
</dbReference>
<dbReference type="Pfam" id="PF07516">
    <property type="entry name" value="SecA_SW"/>
    <property type="match status" value="1"/>
</dbReference>
<dbReference type="PRINTS" id="PR00906">
    <property type="entry name" value="SECA"/>
</dbReference>
<dbReference type="SMART" id="SM00957">
    <property type="entry name" value="SecA_DEAD"/>
    <property type="match status" value="1"/>
</dbReference>
<dbReference type="SMART" id="SM00958">
    <property type="entry name" value="SecA_PP_bind"/>
    <property type="match status" value="1"/>
</dbReference>
<dbReference type="SUPFAM" id="SSF81886">
    <property type="entry name" value="Helical scaffold and wing domains of SecA"/>
    <property type="match status" value="1"/>
</dbReference>
<dbReference type="SUPFAM" id="SSF52540">
    <property type="entry name" value="P-loop containing nucleoside triphosphate hydrolases"/>
    <property type="match status" value="2"/>
</dbReference>
<dbReference type="SUPFAM" id="SSF81767">
    <property type="entry name" value="Pre-protein crosslinking domain of SecA"/>
    <property type="match status" value="1"/>
</dbReference>
<dbReference type="PROSITE" id="PS01312">
    <property type="entry name" value="SECA"/>
    <property type="match status" value="1"/>
</dbReference>
<dbReference type="PROSITE" id="PS51196">
    <property type="entry name" value="SECA_MOTOR_DEAD"/>
    <property type="match status" value="1"/>
</dbReference>
<comment type="function">
    <text evidence="1">Part of the Sec protein translocase complex. Interacts with the SecYEG preprotein conducting channel. Has a central role in coupling the hydrolysis of ATP to the transfer of proteins into and across the cell membrane, serving as an ATP-driven molecular motor driving the stepwise translocation of polypeptide chains across the membrane.</text>
</comment>
<comment type="catalytic activity">
    <reaction evidence="1">
        <text>ATP + H2O + cellular proteinSide 1 = ADP + phosphate + cellular proteinSide 2.</text>
        <dbReference type="EC" id="7.4.2.8"/>
    </reaction>
</comment>
<comment type="cofactor">
    <cofactor evidence="1">
        <name>Zn(2+)</name>
        <dbReference type="ChEBI" id="CHEBI:29105"/>
    </cofactor>
    <text evidence="1">May bind 1 zinc ion per subunit.</text>
</comment>
<comment type="subunit">
    <text evidence="1">Monomer and homodimer. Part of the essential Sec protein translocation apparatus which comprises SecA, SecYEG and auxiliary proteins SecDF. Other proteins may also be involved.</text>
</comment>
<comment type="subcellular location">
    <subcellularLocation>
        <location evidence="1">Cell membrane</location>
        <topology evidence="1">Peripheral membrane protein</topology>
        <orientation evidence="1">Cytoplasmic side</orientation>
    </subcellularLocation>
    <subcellularLocation>
        <location evidence="1">Cytoplasm</location>
    </subcellularLocation>
    <text evidence="1">Distribution is 50-50.</text>
</comment>
<comment type="similarity">
    <text evidence="1">Belongs to the SecA family.</text>
</comment>
<keyword id="KW-0067">ATP-binding</keyword>
<keyword id="KW-1003">Cell membrane</keyword>
<keyword id="KW-0963">Cytoplasm</keyword>
<keyword id="KW-0472">Membrane</keyword>
<keyword id="KW-0479">Metal-binding</keyword>
<keyword id="KW-0547">Nucleotide-binding</keyword>
<keyword id="KW-0653">Protein transport</keyword>
<keyword id="KW-1278">Translocase</keyword>
<keyword id="KW-0811">Translocation</keyword>
<keyword id="KW-0813">Transport</keyword>
<keyword id="KW-0862">Zinc</keyword>
<accession>Q03IX4</accession>
<evidence type="ECO:0000255" key="1">
    <source>
        <dbReference type="HAMAP-Rule" id="MF_01382"/>
    </source>
</evidence>
<protein>
    <recommendedName>
        <fullName evidence="1">Protein translocase subunit SecA</fullName>
        <ecNumber evidence="1">7.4.2.8</ecNumber>
    </recommendedName>
</protein>
<name>SECA_STRTD</name>
<gene>
    <name evidence="1" type="primary">secA</name>
    <name type="ordered locus">STER_1705</name>
</gene>